<accession>P64774</accession>
<accession>A0A1R3XWZ7</accession>
<accession>P71550</accession>
<accession>X2BGP9</accession>
<reference key="1">
    <citation type="journal article" date="2003" name="Proc. Natl. Acad. Sci. U.S.A.">
        <title>The complete genome sequence of Mycobacterium bovis.</title>
        <authorList>
            <person name="Garnier T."/>
            <person name="Eiglmeier K."/>
            <person name="Camus J.-C."/>
            <person name="Medina N."/>
            <person name="Mansoor H."/>
            <person name="Pryor M."/>
            <person name="Duthoy S."/>
            <person name="Grondin S."/>
            <person name="Lacroix C."/>
            <person name="Monsempe C."/>
            <person name="Simon S."/>
            <person name="Harris B."/>
            <person name="Atkin R."/>
            <person name="Doggett J."/>
            <person name="Mayes R."/>
            <person name="Keating L."/>
            <person name="Wheeler P.R."/>
            <person name="Parkhill J."/>
            <person name="Barrell B.G."/>
            <person name="Cole S.T."/>
            <person name="Gordon S.V."/>
            <person name="Hewinson R.G."/>
        </authorList>
    </citation>
    <scope>NUCLEOTIDE SEQUENCE [LARGE SCALE GENOMIC DNA]</scope>
    <source>
        <strain>ATCC BAA-935 / AF2122/97</strain>
    </source>
</reference>
<reference key="2">
    <citation type="journal article" date="2017" name="Genome Announc.">
        <title>Updated reference genome sequence and annotation of Mycobacterium bovis AF2122/97.</title>
        <authorList>
            <person name="Malone K.M."/>
            <person name="Farrell D."/>
            <person name="Stuber T.P."/>
            <person name="Schubert O.T."/>
            <person name="Aebersold R."/>
            <person name="Robbe-Austerman S."/>
            <person name="Gordon S.V."/>
        </authorList>
    </citation>
    <scope>NUCLEOTIDE SEQUENCE [LARGE SCALE GENOMIC DNA]</scope>
    <scope>GENOME REANNOTATION</scope>
    <source>
        <strain>ATCC BAA-935 / AF2122/97</strain>
    </source>
</reference>
<proteinExistence type="inferred from homology"/>
<organism>
    <name type="scientific">Mycobacterium bovis (strain ATCC BAA-935 / AF2122/97)</name>
    <dbReference type="NCBI Taxonomy" id="233413"/>
    <lineage>
        <taxon>Bacteria</taxon>
        <taxon>Bacillati</taxon>
        <taxon>Actinomycetota</taxon>
        <taxon>Actinomycetes</taxon>
        <taxon>Mycobacteriales</taxon>
        <taxon>Mycobacteriaceae</taxon>
        <taxon>Mycobacterium</taxon>
        <taxon>Mycobacterium tuberculosis complex</taxon>
    </lineage>
</organism>
<name>VAPC3_MYCBO</name>
<protein>
    <recommendedName>
        <fullName>VapC ribonuclease Mb0985</fullName>
        <shortName>RNase Mb0985</shortName>
        <ecNumber evidence="1">3.1.-.-</ecNumber>
    </recommendedName>
    <alternativeName>
        <fullName>Toxin Mb0985</fullName>
    </alternativeName>
</protein>
<sequence>MIVVDASAALAALLNDGQARQLIAAERLHVPHLVDSEIASGLRRLAQRDRLGAADGRRALQTWRRLAVTRYPVVGLFERIWEIRANLSAYDASYVALAEALNCALVTADLRLSDTGQAQCPITVVPR</sequence>
<dbReference type="EC" id="3.1.-.-" evidence="1"/>
<dbReference type="EMBL" id="LT708304">
    <property type="protein sequence ID" value="SIT99584.1"/>
    <property type="molecule type" value="Genomic_DNA"/>
</dbReference>
<dbReference type="RefSeq" id="NP_854642.1">
    <property type="nucleotide sequence ID" value="NC_002945.3"/>
</dbReference>
<dbReference type="RefSeq" id="WP_003404903.1">
    <property type="nucleotide sequence ID" value="NC_002945.4"/>
</dbReference>
<dbReference type="SMR" id="P64774"/>
<dbReference type="KEGG" id="mbo:BQ2027_MB0985"/>
<dbReference type="PATRIC" id="fig|233413.5.peg.1073"/>
<dbReference type="Proteomes" id="UP000001419">
    <property type="component" value="Chromosome"/>
</dbReference>
<dbReference type="GO" id="GO:0000287">
    <property type="term" value="F:magnesium ion binding"/>
    <property type="evidence" value="ECO:0007669"/>
    <property type="project" value="UniProtKB-UniRule"/>
</dbReference>
<dbReference type="GO" id="GO:0004540">
    <property type="term" value="F:RNA nuclease activity"/>
    <property type="evidence" value="ECO:0007669"/>
    <property type="project" value="InterPro"/>
</dbReference>
<dbReference type="CDD" id="cd09873">
    <property type="entry name" value="PIN_Pae0151-like"/>
    <property type="match status" value="1"/>
</dbReference>
<dbReference type="Gene3D" id="3.40.50.1010">
    <property type="entry name" value="5'-nuclease"/>
    <property type="match status" value="1"/>
</dbReference>
<dbReference type="HAMAP" id="MF_00265">
    <property type="entry name" value="VapC_Nob1"/>
    <property type="match status" value="1"/>
</dbReference>
<dbReference type="InterPro" id="IPR029060">
    <property type="entry name" value="PIN-like_dom_sf"/>
</dbReference>
<dbReference type="InterPro" id="IPR002716">
    <property type="entry name" value="PIN_dom"/>
</dbReference>
<dbReference type="InterPro" id="IPR044153">
    <property type="entry name" value="PIN_Pae0151-like"/>
</dbReference>
<dbReference type="InterPro" id="IPR051619">
    <property type="entry name" value="TypeII_TA_RNase_PINc/VapC"/>
</dbReference>
<dbReference type="InterPro" id="IPR022907">
    <property type="entry name" value="VapC_family"/>
</dbReference>
<dbReference type="PANTHER" id="PTHR35901:SF1">
    <property type="entry name" value="EXONUCLEASE VAPC9"/>
    <property type="match status" value="1"/>
</dbReference>
<dbReference type="PANTHER" id="PTHR35901">
    <property type="entry name" value="RIBONUCLEASE VAPC3"/>
    <property type="match status" value="1"/>
</dbReference>
<dbReference type="Pfam" id="PF01850">
    <property type="entry name" value="PIN"/>
    <property type="match status" value="1"/>
</dbReference>
<dbReference type="SUPFAM" id="SSF88723">
    <property type="entry name" value="PIN domain-like"/>
    <property type="match status" value="1"/>
</dbReference>
<comment type="function">
    <text evidence="1">Toxic component of a type II toxin-antitoxin (TA) system. An RNase.</text>
</comment>
<comment type="cofactor">
    <cofactor evidence="1">
        <name>Mg(2+)</name>
        <dbReference type="ChEBI" id="CHEBI:18420"/>
    </cofactor>
</comment>
<comment type="similarity">
    <text evidence="1">Belongs to the PINc/VapC protein family.</text>
</comment>
<keyword id="KW-0378">Hydrolase</keyword>
<keyword id="KW-0460">Magnesium</keyword>
<keyword id="KW-0479">Metal-binding</keyword>
<keyword id="KW-0540">Nuclease</keyword>
<keyword id="KW-1185">Reference proteome</keyword>
<keyword id="KW-1277">Toxin-antitoxin system</keyword>
<gene>
    <name type="ordered locus">BQ2027_MB0985</name>
</gene>
<evidence type="ECO:0000255" key="1">
    <source>
        <dbReference type="HAMAP-Rule" id="MF_00265"/>
    </source>
</evidence>
<feature type="chain" id="PRO_0000103756" description="VapC ribonuclease Mb0985">
    <location>
        <begin position="1"/>
        <end position="127"/>
    </location>
</feature>
<feature type="domain" description="PINc" evidence="1">
    <location>
        <begin position="2"/>
        <end position="115"/>
    </location>
</feature>
<feature type="binding site" evidence="1">
    <location>
        <position position="5"/>
    </location>
    <ligand>
        <name>Mg(2+)</name>
        <dbReference type="ChEBI" id="CHEBI:18420"/>
    </ligand>
</feature>
<feature type="binding site" evidence="1">
    <location>
        <position position="91"/>
    </location>
    <ligand>
        <name>Mg(2+)</name>
        <dbReference type="ChEBI" id="CHEBI:18420"/>
    </ligand>
</feature>